<feature type="chain" id="PRO_0000302948" description="S-adenosylmethionine synthase">
    <location>
        <begin position="1"/>
        <end position="396"/>
    </location>
</feature>
<feature type="region of interest" description="Flexible loop" evidence="1">
    <location>
        <begin position="100"/>
        <end position="110"/>
    </location>
</feature>
<feature type="binding site" description="in other chain" evidence="1">
    <location>
        <position position="16"/>
    </location>
    <ligand>
        <name>ATP</name>
        <dbReference type="ChEBI" id="CHEBI:30616"/>
        <note>ligand shared between two neighboring subunits</note>
    </ligand>
</feature>
<feature type="binding site" evidence="1">
    <location>
        <position position="18"/>
    </location>
    <ligand>
        <name>Mg(2+)</name>
        <dbReference type="ChEBI" id="CHEBI:18420"/>
    </ligand>
</feature>
<feature type="binding site" evidence="1">
    <location>
        <position position="44"/>
    </location>
    <ligand>
        <name>K(+)</name>
        <dbReference type="ChEBI" id="CHEBI:29103"/>
    </ligand>
</feature>
<feature type="binding site" description="in other chain" evidence="1">
    <location>
        <position position="57"/>
    </location>
    <ligand>
        <name>L-methionine</name>
        <dbReference type="ChEBI" id="CHEBI:57844"/>
        <note>ligand shared between two neighboring subunits</note>
    </ligand>
</feature>
<feature type="binding site" description="in other chain" evidence="1">
    <location>
        <position position="100"/>
    </location>
    <ligand>
        <name>L-methionine</name>
        <dbReference type="ChEBI" id="CHEBI:57844"/>
        <note>ligand shared between two neighboring subunits</note>
    </ligand>
</feature>
<feature type="binding site" description="in other chain" evidence="1">
    <location>
        <begin position="162"/>
        <end position="164"/>
    </location>
    <ligand>
        <name>ATP</name>
        <dbReference type="ChEBI" id="CHEBI:30616"/>
        <note>ligand shared between two neighboring subunits</note>
    </ligand>
</feature>
<feature type="binding site" description="in other chain" evidence="1">
    <location>
        <begin position="228"/>
        <end position="229"/>
    </location>
    <ligand>
        <name>ATP</name>
        <dbReference type="ChEBI" id="CHEBI:30616"/>
        <note>ligand shared between two neighboring subunits</note>
    </ligand>
</feature>
<feature type="binding site" evidence="1">
    <location>
        <position position="237"/>
    </location>
    <ligand>
        <name>ATP</name>
        <dbReference type="ChEBI" id="CHEBI:30616"/>
        <note>ligand shared between two neighboring subunits</note>
    </ligand>
</feature>
<feature type="binding site" evidence="1">
    <location>
        <position position="237"/>
    </location>
    <ligand>
        <name>L-methionine</name>
        <dbReference type="ChEBI" id="CHEBI:57844"/>
        <note>ligand shared between two neighboring subunits</note>
    </ligand>
</feature>
<feature type="binding site" description="in other chain" evidence="1">
    <location>
        <begin position="243"/>
        <end position="244"/>
    </location>
    <ligand>
        <name>ATP</name>
        <dbReference type="ChEBI" id="CHEBI:30616"/>
        <note>ligand shared between two neighboring subunits</note>
    </ligand>
</feature>
<feature type="binding site" evidence="1">
    <location>
        <position position="260"/>
    </location>
    <ligand>
        <name>ATP</name>
        <dbReference type="ChEBI" id="CHEBI:30616"/>
        <note>ligand shared between two neighboring subunits</note>
    </ligand>
</feature>
<feature type="binding site" evidence="1">
    <location>
        <position position="264"/>
    </location>
    <ligand>
        <name>ATP</name>
        <dbReference type="ChEBI" id="CHEBI:30616"/>
        <note>ligand shared between two neighboring subunits</note>
    </ligand>
</feature>
<feature type="binding site" description="in other chain" evidence="1">
    <location>
        <position position="268"/>
    </location>
    <ligand>
        <name>L-methionine</name>
        <dbReference type="ChEBI" id="CHEBI:57844"/>
        <note>ligand shared between two neighboring subunits</note>
    </ligand>
</feature>
<gene>
    <name evidence="1" type="primary">metK</name>
    <name type="ordered locus">MXAN_6517</name>
</gene>
<dbReference type="EC" id="2.5.1.6" evidence="1"/>
<dbReference type="EMBL" id="CP000113">
    <property type="protein sequence ID" value="ABF89602.1"/>
    <property type="molecule type" value="Genomic_DNA"/>
</dbReference>
<dbReference type="RefSeq" id="WP_011556448.1">
    <property type="nucleotide sequence ID" value="NC_008095.1"/>
</dbReference>
<dbReference type="SMR" id="Q1CY83"/>
<dbReference type="STRING" id="246197.MXAN_6517"/>
<dbReference type="EnsemblBacteria" id="ABF89602">
    <property type="protein sequence ID" value="ABF89602"/>
    <property type="gene ID" value="MXAN_6517"/>
</dbReference>
<dbReference type="GeneID" id="41363725"/>
<dbReference type="KEGG" id="mxa:MXAN_6517"/>
<dbReference type="eggNOG" id="COG0192">
    <property type="taxonomic scope" value="Bacteria"/>
</dbReference>
<dbReference type="HOGENOM" id="CLU_041802_1_1_7"/>
<dbReference type="OrthoDB" id="9801686at2"/>
<dbReference type="UniPathway" id="UPA00315">
    <property type="reaction ID" value="UER00080"/>
</dbReference>
<dbReference type="Proteomes" id="UP000002402">
    <property type="component" value="Chromosome"/>
</dbReference>
<dbReference type="GO" id="GO:0005737">
    <property type="term" value="C:cytoplasm"/>
    <property type="evidence" value="ECO:0007669"/>
    <property type="project" value="UniProtKB-SubCell"/>
</dbReference>
<dbReference type="GO" id="GO:0005524">
    <property type="term" value="F:ATP binding"/>
    <property type="evidence" value="ECO:0007669"/>
    <property type="project" value="UniProtKB-UniRule"/>
</dbReference>
<dbReference type="GO" id="GO:0000287">
    <property type="term" value="F:magnesium ion binding"/>
    <property type="evidence" value="ECO:0007669"/>
    <property type="project" value="UniProtKB-UniRule"/>
</dbReference>
<dbReference type="GO" id="GO:0004478">
    <property type="term" value="F:methionine adenosyltransferase activity"/>
    <property type="evidence" value="ECO:0007669"/>
    <property type="project" value="UniProtKB-UniRule"/>
</dbReference>
<dbReference type="GO" id="GO:0006730">
    <property type="term" value="P:one-carbon metabolic process"/>
    <property type="evidence" value="ECO:0007669"/>
    <property type="project" value="UniProtKB-KW"/>
</dbReference>
<dbReference type="GO" id="GO:0006556">
    <property type="term" value="P:S-adenosylmethionine biosynthetic process"/>
    <property type="evidence" value="ECO:0007669"/>
    <property type="project" value="UniProtKB-UniRule"/>
</dbReference>
<dbReference type="CDD" id="cd18079">
    <property type="entry name" value="S-AdoMet_synt"/>
    <property type="match status" value="1"/>
</dbReference>
<dbReference type="FunFam" id="3.30.300.10:FF:000003">
    <property type="entry name" value="S-adenosylmethionine synthase"/>
    <property type="match status" value="1"/>
</dbReference>
<dbReference type="FunFam" id="3.30.300.10:FF:000004">
    <property type="entry name" value="S-adenosylmethionine synthase"/>
    <property type="match status" value="1"/>
</dbReference>
<dbReference type="Gene3D" id="3.30.300.10">
    <property type="match status" value="3"/>
</dbReference>
<dbReference type="HAMAP" id="MF_00086">
    <property type="entry name" value="S_AdoMet_synth1"/>
    <property type="match status" value="1"/>
</dbReference>
<dbReference type="InterPro" id="IPR022631">
    <property type="entry name" value="ADOMET_SYNTHASE_CS"/>
</dbReference>
<dbReference type="InterPro" id="IPR022630">
    <property type="entry name" value="S-AdoMet_synt_C"/>
</dbReference>
<dbReference type="InterPro" id="IPR022629">
    <property type="entry name" value="S-AdoMet_synt_central"/>
</dbReference>
<dbReference type="InterPro" id="IPR022628">
    <property type="entry name" value="S-AdoMet_synt_N"/>
</dbReference>
<dbReference type="InterPro" id="IPR002133">
    <property type="entry name" value="S-AdoMet_synthetase"/>
</dbReference>
<dbReference type="InterPro" id="IPR022636">
    <property type="entry name" value="S-AdoMet_synthetase_sfam"/>
</dbReference>
<dbReference type="NCBIfam" id="TIGR01034">
    <property type="entry name" value="metK"/>
    <property type="match status" value="1"/>
</dbReference>
<dbReference type="PANTHER" id="PTHR11964">
    <property type="entry name" value="S-ADENOSYLMETHIONINE SYNTHETASE"/>
    <property type="match status" value="1"/>
</dbReference>
<dbReference type="Pfam" id="PF02773">
    <property type="entry name" value="S-AdoMet_synt_C"/>
    <property type="match status" value="1"/>
</dbReference>
<dbReference type="Pfam" id="PF02772">
    <property type="entry name" value="S-AdoMet_synt_M"/>
    <property type="match status" value="1"/>
</dbReference>
<dbReference type="Pfam" id="PF00438">
    <property type="entry name" value="S-AdoMet_synt_N"/>
    <property type="match status" value="1"/>
</dbReference>
<dbReference type="PIRSF" id="PIRSF000497">
    <property type="entry name" value="MAT"/>
    <property type="match status" value="1"/>
</dbReference>
<dbReference type="SUPFAM" id="SSF55973">
    <property type="entry name" value="S-adenosylmethionine synthetase"/>
    <property type="match status" value="3"/>
</dbReference>
<dbReference type="PROSITE" id="PS00376">
    <property type="entry name" value="ADOMET_SYNTHASE_1"/>
    <property type="match status" value="1"/>
</dbReference>
<dbReference type="PROSITE" id="PS00377">
    <property type="entry name" value="ADOMET_SYNTHASE_2"/>
    <property type="match status" value="1"/>
</dbReference>
<sequence>MPTDFLFTSESVTEGHPDKIADQISDGVLDAIIAKDPQARVAVETLVKTGLAIVAGEVTTNCYVDIPKLVRSTICRIGYTDSSMGYDGNTCGVMVAIEGQSQDIARGVDNKKDQGAGDQGMMFGFACDETPELMPAPIHYAHAITRRLADVRRKQHPWIRPDGKSQVTVEYRDGRPARIDAVVVSTQHSDEVSNKKIQEAIREDVIAKALPKKLIDNKTKFFINPTGRFVVGGPMGDSGLTGRKIIVDTYGGMGRHGGGAFSGKDPSKVDRSAAYMGRHIAKTVVAAGLARRCEVQVSYAIGVAEPVSVMVETFGTATVPEERIALAVRKTFGLRPREITEYLNLLRPIYQKTAAYGHFGRTEKEFTWERVEEKKDALRDAAKSATPSGGRRLKAV</sequence>
<accession>Q1CY83</accession>
<reference key="1">
    <citation type="journal article" date="2006" name="Proc. Natl. Acad. Sci. U.S.A.">
        <title>Evolution of sensory complexity recorded in a myxobacterial genome.</title>
        <authorList>
            <person name="Goldman B.S."/>
            <person name="Nierman W.C."/>
            <person name="Kaiser D."/>
            <person name="Slater S.C."/>
            <person name="Durkin A.S."/>
            <person name="Eisen J.A."/>
            <person name="Ronning C.M."/>
            <person name="Barbazuk W.B."/>
            <person name="Blanchard M."/>
            <person name="Field C."/>
            <person name="Halling C."/>
            <person name="Hinkle G."/>
            <person name="Iartchuk O."/>
            <person name="Kim H.S."/>
            <person name="Mackenzie C."/>
            <person name="Madupu R."/>
            <person name="Miller N."/>
            <person name="Shvartsbeyn A."/>
            <person name="Sullivan S.A."/>
            <person name="Vaudin M."/>
            <person name="Wiegand R."/>
            <person name="Kaplan H.B."/>
        </authorList>
    </citation>
    <scope>NUCLEOTIDE SEQUENCE [LARGE SCALE GENOMIC DNA]</scope>
    <source>
        <strain>DK1622</strain>
    </source>
</reference>
<name>METK_MYXXD</name>
<comment type="function">
    <text evidence="1">Catalyzes the formation of S-adenosylmethionine (AdoMet) from methionine and ATP. The overall synthetic reaction is composed of two sequential steps, AdoMet formation and the subsequent tripolyphosphate hydrolysis which occurs prior to release of AdoMet from the enzyme.</text>
</comment>
<comment type="catalytic activity">
    <reaction evidence="1">
        <text>L-methionine + ATP + H2O = S-adenosyl-L-methionine + phosphate + diphosphate</text>
        <dbReference type="Rhea" id="RHEA:21080"/>
        <dbReference type="ChEBI" id="CHEBI:15377"/>
        <dbReference type="ChEBI" id="CHEBI:30616"/>
        <dbReference type="ChEBI" id="CHEBI:33019"/>
        <dbReference type="ChEBI" id="CHEBI:43474"/>
        <dbReference type="ChEBI" id="CHEBI:57844"/>
        <dbReference type="ChEBI" id="CHEBI:59789"/>
        <dbReference type="EC" id="2.5.1.6"/>
    </reaction>
</comment>
<comment type="cofactor">
    <cofactor evidence="1">
        <name>Mg(2+)</name>
        <dbReference type="ChEBI" id="CHEBI:18420"/>
    </cofactor>
    <text evidence="1">Binds 2 divalent ions per subunit.</text>
</comment>
<comment type="cofactor">
    <cofactor evidence="1">
        <name>K(+)</name>
        <dbReference type="ChEBI" id="CHEBI:29103"/>
    </cofactor>
    <text evidence="1">Binds 1 potassium ion per subunit.</text>
</comment>
<comment type="pathway">
    <text evidence="1">Amino-acid biosynthesis; S-adenosyl-L-methionine biosynthesis; S-adenosyl-L-methionine from L-methionine: step 1/1.</text>
</comment>
<comment type="subunit">
    <text evidence="1">Homotetramer; dimer of dimers.</text>
</comment>
<comment type="subcellular location">
    <subcellularLocation>
        <location evidence="1">Cytoplasm</location>
    </subcellularLocation>
</comment>
<comment type="similarity">
    <text evidence="1">Belongs to the AdoMet synthase family.</text>
</comment>
<evidence type="ECO:0000255" key="1">
    <source>
        <dbReference type="HAMAP-Rule" id="MF_00086"/>
    </source>
</evidence>
<proteinExistence type="inferred from homology"/>
<organism>
    <name type="scientific">Myxococcus xanthus (strain DK1622)</name>
    <dbReference type="NCBI Taxonomy" id="246197"/>
    <lineage>
        <taxon>Bacteria</taxon>
        <taxon>Pseudomonadati</taxon>
        <taxon>Myxococcota</taxon>
        <taxon>Myxococcia</taxon>
        <taxon>Myxococcales</taxon>
        <taxon>Cystobacterineae</taxon>
        <taxon>Myxococcaceae</taxon>
        <taxon>Myxococcus</taxon>
    </lineage>
</organism>
<keyword id="KW-0067">ATP-binding</keyword>
<keyword id="KW-0963">Cytoplasm</keyword>
<keyword id="KW-0460">Magnesium</keyword>
<keyword id="KW-0479">Metal-binding</keyword>
<keyword id="KW-0547">Nucleotide-binding</keyword>
<keyword id="KW-0554">One-carbon metabolism</keyword>
<keyword id="KW-0630">Potassium</keyword>
<keyword id="KW-1185">Reference proteome</keyword>
<keyword id="KW-0808">Transferase</keyword>
<protein>
    <recommendedName>
        <fullName evidence="1">S-adenosylmethionine synthase</fullName>
        <shortName evidence="1">AdoMet synthase</shortName>
        <ecNumber evidence="1">2.5.1.6</ecNumber>
    </recommendedName>
    <alternativeName>
        <fullName evidence="1">MAT</fullName>
    </alternativeName>
    <alternativeName>
        <fullName evidence="1">Methionine adenosyltransferase</fullName>
    </alternativeName>
</protein>